<name>ECOT_SALPK</name>
<dbReference type="EMBL" id="FM200053">
    <property type="protein sequence ID" value="CAR58694.1"/>
    <property type="molecule type" value="Genomic_DNA"/>
</dbReference>
<dbReference type="RefSeq" id="WP_011232985.1">
    <property type="nucleotide sequence ID" value="NC_011147.1"/>
</dbReference>
<dbReference type="SMR" id="B5BDZ1"/>
<dbReference type="MEROPS" id="I11.001"/>
<dbReference type="KEGG" id="sek:SSPA0566"/>
<dbReference type="HOGENOM" id="CLU_111565_0_0_6"/>
<dbReference type="Proteomes" id="UP000001869">
    <property type="component" value="Chromosome"/>
</dbReference>
<dbReference type="GO" id="GO:0042597">
    <property type="term" value="C:periplasmic space"/>
    <property type="evidence" value="ECO:0007669"/>
    <property type="project" value="UniProtKB-SubCell"/>
</dbReference>
<dbReference type="GO" id="GO:0004867">
    <property type="term" value="F:serine-type endopeptidase inhibitor activity"/>
    <property type="evidence" value="ECO:0007669"/>
    <property type="project" value="UniProtKB-UniRule"/>
</dbReference>
<dbReference type="CDD" id="cd00242">
    <property type="entry name" value="Ecotin"/>
    <property type="match status" value="1"/>
</dbReference>
<dbReference type="FunFam" id="2.60.40.550:FF:000001">
    <property type="entry name" value="Ecotin"/>
    <property type="match status" value="1"/>
</dbReference>
<dbReference type="FunFam" id="4.10.1230.10:FF:000001">
    <property type="entry name" value="Ecotin"/>
    <property type="match status" value="1"/>
</dbReference>
<dbReference type="Gene3D" id="2.60.40.550">
    <property type="entry name" value="Ecotin"/>
    <property type="match status" value="1"/>
</dbReference>
<dbReference type="Gene3D" id="4.10.1230.10">
    <property type="entry name" value="Ecotin, trypsin inhibitor"/>
    <property type="match status" value="1"/>
</dbReference>
<dbReference type="HAMAP" id="MF_00706">
    <property type="entry name" value="Ecotin"/>
    <property type="match status" value="1"/>
</dbReference>
<dbReference type="InterPro" id="IPR027438">
    <property type="entry name" value="Ecotin_C"/>
</dbReference>
<dbReference type="InterPro" id="IPR036198">
    <property type="entry name" value="Ecotin_sf"/>
</dbReference>
<dbReference type="InterPro" id="IPR005658">
    <property type="entry name" value="Prot_inh_ecotin"/>
</dbReference>
<dbReference type="InterPro" id="IPR023084">
    <property type="entry name" value="Prot_inh_ecotin_gammaproteobac"/>
</dbReference>
<dbReference type="NCBIfam" id="NF002987">
    <property type="entry name" value="PRK03719.1"/>
    <property type="match status" value="1"/>
</dbReference>
<dbReference type="PANTHER" id="PTHR35890">
    <property type="match status" value="1"/>
</dbReference>
<dbReference type="PANTHER" id="PTHR35890:SF3">
    <property type="entry name" value="ECOTIN"/>
    <property type="match status" value="1"/>
</dbReference>
<dbReference type="Pfam" id="PF03974">
    <property type="entry name" value="Ecotin"/>
    <property type="match status" value="1"/>
</dbReference>
<dbReference type="PIRSF" id="PIRSF006865">
    <property type="entry name" value="Prot_inh_ecotin"/>
    <property type="match status" value="1"/>
</dbReference>
<dbReference type="SUPFAM" id="SSF49772">
    <property type="entry name" value="Ecotin, trypsin inhibitor"/>
    <property type="match status" value="1"/>
</dbReference>
<gene>
    <name evidence="1" type="primary">eco</name>
    <name type="ordered locus">SSPA0566</name>
</gene>
<keyword id="KW-1015">Disulfide bond</keyword>
<keyword id="KW-0574">Periplasm</keyword>
<keyword id="KW-0646">Protease inhibitor</keyword>
<keyword id="KW-0722">Serine protease inhibitor</keyword>
<keyword id="KW-0732">Signal</keyword>
<sequence>MKMFVPAVVFAALASASAWANNGDTAQPLEKIAPYPQAEKGMKRQVITLTPQQDESTLKVELLIGQTLNVDCNQHRLGGTLETKTLEGWGYDYYVFDNVTSPVSTMMACPDGKKEQKFVTAWLGEDGMVRYNSKLPIVVYTPANVDVKYRIWKADANVQNAVAR</sequence>
<protein>
    <recommendedName>
        <fullName evidence="1">Ecotin</fullName>
    </recommendedName>
</protein>
<comment type="function">
    <text evidence="1">General inhibitor of pancreatic serine proteases: inhibits chymotrypsin, trypsin, elastases, factor X, kallikrein as well as a variety of other proteases.</text>
</comment>
<comment type="subunit">
    <text evidence="1">Homodimer.</text>
</comment>
<comment type="subcellular location">
    <subcellularLocation>
        <location evidence="1">Periplasm</location>
    </subcellularLocation>
</comment>
<comment type="similarity">
    <text evidence="1">Belongs to the protease inhibitor I11 (ecotin) family.</text>
</comment>
<reference key="1">
    <citation type="journal article" date="2009" name="BMC Genomics">
        <title>Pseudogene accumulation in the evolutionary histories of Salmonella enterica serovars Paratyphi A and Typhi.</title>
        <authorList>
            <person name="Holt K.E."/>
            <person name="Thomson N.R."/>
            <person name="Wain J."/>
            <person name="Langridge G.C."/>
            <person name="Hasan R."/>
            <person name="Bhutta Z.A."/>
            <person name="Quail M.A."/>
            <person name="Norbertczak H."/>
            <person name="Walker D."/>
            <person name="Simmonds M."/>
            <person name="White B."/>
            <person name="Bason N."/>
            <person name="Mungall K."/>
            <person name="Dougan G."/>
            <person name="Parkhill J."/>
        </authorList>
    </citation>
    <scope>NUCLEOTIDE SEQUENCE [LARGE SCALE GENOMIC DNA]</scope>
    <source>
        <strain>AKU_12601</strain>
    </source>
</reference>
<proteinExistence type="inferred from homology"/>
<organism>
    <name type="scientific">Salmonella paratyphi A (strain AKU_12601)</name>
    <dbReference type="NCBI Taxonomy" id="554290"/>
    <lineage>
        <taxon>Bacteria</taxon>
        <taxon>Pseudomonadati</taxon>
        <taxon>Pseudomonadota</taxon>
        <taxon>Gammaproteobacteria</taxon>
        <taxon>Enterobacterales</taxon>
        <taxon>Enterobacteriaceae</taxon>
        <taxon>Salmonella</taxon>
    </lineage>
</organism>
<evidence type="ECO:0000255" key="1">
    <source>
        <dbReference type="HAMAP-Rule" id="MF_00706"/>
    </source>
</evidence>
<accession>B5BDZ1</accession>
<feature type="signal peptide" evidence="1">
    <location>
        <begin position="1"/>
        <end position="20"/>
    </location>
</feature>
<feature type="chain" id="PRO_1000132365" description="Ecotin">
    <location>
        <begin position="21"/>
        <end position="164"/>
    </location>
</feature>
<feature type="site" description="Reactive bond" evidence="1">
    <location>
        <begin position="106"/>
        <end position="107"/>
    </location>
</feature>
<feature type="disulfide bond" evidence="1">
    <location>
        <begin position="72"/>
        <end position="109"/>
    </location>
</feature>